<keyword id="KW-0997">Cell inner membrane</keyword>
<keyword id="KW-1003">Cell membrane</keyword>
<keyword id="KW-0472">Membrane</keyword>
<keyword id="KW-0511">Multifunctional enzyme</keyword>
<keyword id="KW-0520">NAD</keyword>
<keyword id="KW-0874">Quinone</keyword>
<keyword id="KW-1185">Reference proteome</keyword>
<keyword id="KW-1278">Translocase</keyword>
<keyword id="KW-0813">Transport</keyword>
<keyword id="KW-0830">Ubiquinone</keyword>
<comment type="function">
    <text evidence="1">NDH-1 shuttles electrons from NADH, via FMN and iron-sulfur (Fe-S) centers, to quinones in the respiratory chain. The immediate electron acceptor for the enzyme in this species is believed to be ubiquinone. Couples the redox reaction to proton translocation (for every two electrons transferred, four hydrogen ions are translocated across the cytoplasmic membrane), and thus conserves the redox energy in a proton gradient.</text>
</comment>
<comment type="catalytic activity">
    <reaction evidence="1">
        <text>a quinone + NADH + 5 H(+)(in) = a quinol + NAD(+) + 4 H(+)(out)</text>
        <dbReference type="Rhea" id="RHEA:57888"/>
        <dbReference type="ChEBI" id="CHEBI:15378"/>
        <dbReference type="ChEBI" id="CHEBI:24646"/>
        <dbReference type="ChEBI" id="CHEBI:57540"/>
        <dbReference type="ChEBI" id="CHEBI:57945"/>
        <dbReference type="ChEBI" id="CHEBI:132124"/>
    </reaction>
</comment>
<comment type="subunit">
    <text evidence="1">NDH-1 is composed of 13 different subunits. Subunits NuoB, CD, E, F, and G constitute the peripheral sector of the complex.</text>
</comment>
<comment type="subcellular location">
    <subcellularLocation>
        <location evidence="1">Cell inner membrane</location>
        <topology evidence="1">Peripheral membrane protein</topology>
        <orientation evidence="1">Cytoplasmic side</orientation>
    </subcellularLocation>
</comment>
<comment type="similarity">
    <text evidence="1">In the N-terminal section; belongs to the complex I 30 kDa subunit family.</text>
</comment>
<comment type="similarity">
    <text evidence="1">In the C-terminal section; belongs to the complex I 49 kDa subunit family.</text>
</comment>
<name>NUOCD_CHRSD</name>
<feature type="chain" id="PRO_0000358626" description="NADH-quinone oxidoreductase subunit C/D">
    <location>
        <begin position="1"/>
        <end position="592"/>
    </location>
</feature>
<feature type="region of interest" description="NADH dehydrogenase I subunit C" evidence="1">
    <location>
        <begin position="1"/>
        <end position="183"/>
    </location>
</feature>
<feature type="region of interest" description="NADH dehydrogenase I subunit D" evidence="1">
    <location>
        <begin position="207"/>
        <end position="592"/>
    </location>
</feature>
<sequence>MSAAQSPTAQHAHAEDPVVQALFARFGQHVFVAQATHTGMPVLWLDREYLLEVLNFLRDMPEPFEMLFDLHGIDERLRSHREDLPPADFTVFYQLMSISRNRDIMLKVALSERDLEVPSVAGVYPNANWYEREVWDMFGIDFRGHPHLTRLLMPPTWNGHPLRKDYPARATEFDPYTLTVEGQSTEQEALRFDPEAWGMQRQSENTDYMFLNLGPNHPSAHGAFRIALQLDGEVVVDCVPDIGYHHRGAEKMAERQSWHSYIPYTDRIDYTGGVMNNLPYVMAVEKLAGIEVTDRAKTIRVMMAEMFRINSHLLFLGTYLQDLGAMTPVFFTFTDRQKAYEVIEGITGFRMHPAWYRIGGTAHDLPRGWDKLVQGFLDWMPKRLVEYERAMMENAIIRERTKQVAAFTTREALEWGVTGPNLRATGCDFDLRKQRPYSGYENFDFEVPLGANGDVFDRGQLRIDEMRQSLRIIQQCVDHMPAGDYKADHPLTTPPPREKMLQHIETLITHFLQVSWGPVLKPNESLSMIEATKGINSYYLTADGNTMSYRTRIRTPSFPHLQQIPAAVRGALVPDLIAHLGSIDFVMADVDR</sequence>
<dbReference type="EC" id="7.1.1.-" evidence="1"/>
<dbReference type="EMBL" id="CP000285">
    <property type="protein sequence ID" value="ABE60474.1"/>
    <property type="molecule type" value="Genomic_DNA"/>
</dbReference>
<dbReference type="RefSeq" id="WP_011508420.1">
    <property type="nucleotide sequence ID" value="NC_007963.1"/>
</dbReference>
<dbReference type="SMR" id="Q1QST4"/>
<dbReference type="STRING" id="290398.Csal_3130"/>
<dbReference type="GeneID" id="95335825"/>
<dbReference type="KEGG" id="csa:Csal_3130"/>
<dbReference type="eggNOG" id="COG0649">
    <property type="taxonomic scope" value="Bacteria"/>
</dbReference>
<dbReference type="eggNOG" id="COG0852">
    <property type="taxonomic scope" value="Bacteria"/>
</dbReference>
<dbReference type="HOGENOM" id="CLU_015134_3_2_6"/>
<dbReference type="OrthoDB" id="9801496at2"/>
<dbReference type="Proteomes" id="UP000000239">
    <property type="component" value="Chromosome"/>
</dbReference>
<dbReference type="GO" id="GO:0030964">
    <property type="term" value="C:NADH dehydrogenase complex"/>
    <property type="evidence" value="ECO:0007669"/>
    <property type="project" value="InterPro"/>
</dbReference>
<dbReference type="GO" id="GO:0005886">
    <property type="term" value="C:plasma membrane"/>
    <property type="evidence" value="ECO:0007669"/>
    <property type="project" value="UniProtKB-SubCell"/>
</dbReference>
<dbReference type="GO" id="GO:0051287">
    <property type="term" value="F:NAD binding"/>
    <property type="evidence" value="ECO:0007669"/>
    <property type="project" value="InterPro"/>
</dbReference>
<dbReference type="GO" id="GO:0008137">
    <property type="term" value="F:NADH dehydrogenase (ubiquinone) activity"/>
    <property type="evidence" value="ECO:0007669"/>
    <property type="project" value="InterPro"/>
</dbReference>
<dbReference type="GO" id="GO:0050136">
    <property type="term" value="F:NADH:ubiquinone reductase (non-electrogenic) activity"/>
    <property type="evidence" value="ECO:0007669"/>
    <property type="project" value="UniProtKB-UniRule"/>
</dbReference>
<dbReference type="GO" id="GO:0048038">
    <property type="term" value="F:quinone binding"/>
    <property type="evidence" value="ECO:0007669"/>
    <property type="project" value="UniProtKB-KW"/>
</dbReference>
<dbReference type="FunFam" id="1.10.645.10:FF:000001">
    <property type="entry name" value="NADH-quinone oxidoreductase subunit C/D"/>
    <property type="match status" value="1"/>
</dbReference>
<dbReference type="FunFam" id="3.30.460.80:FF:000001">
    <property type="entry name" value="NADH-quinone oxidoreductase subunit C/D"/>
    <property type="match status" value="1"/>
</dbReference>
<dbReference type="Gene3D" id="1.10.645.10">
    <property type="entry name" value="Cytochrome-c3 Hydrogenase, chain B"/>
    <property type="match status" value="1"/>
</dbReference>
<dbReference type="Gene3D" id="3.30.460.80">
    <property type="entry name" value="NADH:ubiquinone oxidoreductase, 30kDa subunit"/>
    <property type="match status" value="1"/>
</dbReference>
<dbReference type="HAMAP" id="MF_01357">
    <property type="entry name" value="NDH1_NuoC"/>
    <property type="match status" value="1"/>
</dbReference>
<dbReference type="HAMAP" id="MF_01359">
    <property type="entry name" value="NDH1_NuoCD_1"/>
    <property type="match status" value="1"/>
</dbReference>
<dbReference type="HAMAP" id="MF_01358">
    <property type="entry name" value="NDH1_NuoD"/>
    <property type="match status" value="1"/>
</dbReference>
<dbReference type="InterPro" id="IPR010218">
    <property type="entry name" value="NADH_DH_suC"/>
</dbReference>
<dbReference type="InterPro" id="IPR023062">
    <property type="entry name" value="NADH_DH_suCD"/>
</dbReference>
<dbReference type="InterPro" id="IPR001135">
    <property type="entry name" value="NADH_Q_OxRdtase_suD"/>
</dbReference>
<dbReference type="InterPro" id="IPR037232">
    <property type="entry name" value="NADH_quin_OxRdtase_su_C/D-like"/>
</dbReference>
<dbReference type="InterPro" id="IPR001268">
    <property type="entry name" value="NADH_UbQ_OxRdtase_30kDa_su"/>
</dbReference>
<dbReference type="InterPro" id="IPR014029">
    <property type="entry name" value="NADH_UbQ_OxRdtase_49kDa_CS"/>
</dbReference>
<dbReference type="InterPro" id="IPR022885">
    <property type="entry name" value="NDH1_su_D/H"/>
</dbReference>
<dbReference type="InterPro" id="IPR029014">
    <property type="entry name" value="NiFe-Hase_large"/>
</dbReference>
<dbReference type="NCBIfam" id="TIGR01961">
    <property type="entry name" value="NuoC_fam"/>
    <property type="match status" value="1"/>
</dbReference>
<dbReference type="NCBIfam" id="TIGR01962">
    <property type="entry name" value="NuoD"/>
    <property type="match status" value="1"/>
</dbReference>
<dbReference type="NCBIfam" id="NF004739">
    <property type="entry name" value="PRK06075.1"/>
    <property type="match status" value="1"/>
</dbReference>
<dbReference type="NCBIfam" id="NF008728">
    <property type="entry name" value="PRK11742.1"/>
    <property type="match status" value="1"/>
</dbReference>
<dbReference type="PANTHER" id="PTHR11993:SF45">
    <property type="entry name" value="NADH-QUINONE OXIDOREDUCTASE SUBUNIT C_D"/>
    <property type="match status" value="1"/>
</dbReference>
<dbReference type="PANTHER" id="PTHR11993">
    <property type="entry name" value="NADH-UBIQUINONE OXIDOREDUCTASE 49 KDA SUBUNIT"/>
    <property type="match status" value="1"/>
</dbReference>
<dbReference type="Pfam" id="PF00329">
    <property type="entry name" value="Complex1_30kDa"/>
    <property type="match status" value="1"/>
</dbReference>
<dbReference type="Pfam" id="PF00346">
    <property type="entry name" value="Complex1_49kDa"/>
    <property type="match status" value="1"/>
</dbReference>
<dbReference type="SUPFAM" id="SSF56762">
    <property type="entry name" value="HydB/Nqo4-like"/>
    <property type="match status" value="1"/>
</dbReference>
<dbReference type="SUPFAM" id="SSF143243">
    <property type="entry name" value="Nqo5-like"/>
    <property type="match status" value="1"/>
</dbReference>
<dbReference type="PROSITE" id="PS00535">
    <property type="entry name" value="COMPLEX1_49K"/>
    <property type="match status" value="1"/>
</dbReference>
<organism>
    <name type="scientific">Chromohalobacter salexigens (strain ATCC BAA-138 / DSM 3043 / CIP 106854 / NCIMB 13768 / 1H11)</name>
    <dbReference type="NCBI Taxonomy" id="290398"/>
    <lineage>
        <taxon>Bacteria</taxon>
        <taxon>Pseudomonadati</taxon>
        <taxon>Pseudomonadota</taxon>
        <taxon>Gammaproteobacteria</taxon>
        <taxon>Oceanospirillales</taxon>
        <taxon>Halomonadaceae</taxon>
        <taxon>Chromohalobacter</taxon>
    </lineage>
</organism>
<accession>Q1QST4</accession>
<gene>
    <name evidence="1" type="primary">nuoC</name>
    <name evidence="1" type="synonym">nuoCD</name>
    <name evidence="1" type="synonym">nuoD</name>
    <name type="ordered locus">Csal_3130</name>
</gene>
<evidence type="ECO:0000255" key="1">
    <source>
        <dbReference type="HAMAP-Rule" id="MF_01359"/>
    </source>
</evidence>
<protein>
    <recommendedName>
        <fullName evidence="1">NADH-quinone oxidoreductase subunit C/D</fullName>
        <ecNumber evidence="1">7.1.1.-</ecNumber>
    </recommendedName>
    <alternativeName>
        <fullName evidence="1">NADH dehydrogenase I subunit C/D</fullName>
    </alternativeName>
    <alternativeName>
        <fullName evidence="1">NDH-1 subunit C/D</fullName>
    </alternativeName>
</protein>
<reference key="1">
    <citation type="journal article" date="2011" name="Stand. Genomic Sci.">
        <title>Complete genome sequence of the halophilic and highly halotolerant Chromohalobacter salexigens type strain (1H11(T)).</title>
        <authorList>
            <person name="Copeland A."/>
            <person name="O'Connor K."/>
            <person name="Lucas S."/>
            <person name="Lapidus A."/>
            <person name="Berry K.W."/>
            <person name="Detter J.C."/>
            <person name="Del Rio T.G."/>
            <person name="Hammon N."/>
            <person name="Dalin E."/>
            <person name="Tice H."/>
            <person name="Pitluck S."/>
            <person name="Bruce D."/>
            <person name="Goodwin L."/>
            <person name="Han C."/>
            <person name="Tapia R."/>
            <person name="Saunders E."/>
            <person name="Schmutz J."/>
            <person name="Brettin T."/>
            <person name="Larimer F."/>
            <person name="Land M."/>
            <person name="Hauser L."/>
            <person name="Vargas C."/>
            <person name="Nieto J.J."/>
            <person name="Kyrpides N.C."/>
            <person name="Ivanova N."/>
            <person name="Goker M."/>
            <person name="Klenk H.P."/>
            <person name="Csonka L.N."/>
            <person name="Woyke T."/>
        </authorList>
    </citation>
    <scope>NUCLEOTIDE SEQUENCE [LARGE SCALE GENOMIC DNA]</scope>
    <source>
        <strain>ATCC BAA-138 / DSM 3043 / CIP 106854 / NCIMB 13768 / 1H11</strain>
    </source>
</reference>
<proteinExistence type="inferred from homology"/>